<keyword id="KW-0002">3D-structure</keyword>
<keyword id="KW-0408">Iron</keyword>
<keyword id="KW-0479">Metal-binding</keyword>
<keyword id="KW-0663">Pyridoxal phosphate</keyword>
<keyword id="KW-1185">Reference proteome</keyword>
<keyword id="KW-0784">Thiamine biosynthesis</keyword>
<keyword id="KW-0808">Transferase</keyword>
<reference key="1">
    <citation type="submission" date="1995-02" db="EMBL/GenBank/DDBJ databases">
        <title>Characterisation of a new thiamine regulated Saccharomyces cerevisiae gene, THI5.</title>
        <authorList>
            <person name="Hather R.J."/>
            <person name="Praekelt U."/>
            <person name="Meacock P.A."/>
        </authorList>
    </citation>
    <scope>NUCLEOTIDE SEQUENCE [GENOMIC DNA]</scope>
    <source>
        <strain>ATCC 204508 / S288c</strain>
    </source>
</reference>
<reference key="2">
    <citation type="journal article" date="1995" name="Nat. Genet.">
        <title>Analysis of the nucleotide sequence of chromosome VI from Saccharomyces cerevisiae.</title>
        <authorList>
            <person name="Murakami Y."/>
            <person name="Naitou M."/>
            <person name="Hagiwara H."/>
            <person name="Shibata T."/>
            <person name="Ozawa M."/>
            <person name="Sasanuma S."/>
            <person name="Sasanuma M."/>
            <person name="Tsuchiya Y."/>
            <person name="Soeda E."/>
            <person name="Yokoyama K."/>
            <person name="Yamazaki M."/>
            <person name="Tashiro H."/>
            <person name="Eki T."/>
        </authorList>
    </citation>
    <scope>NUCLEOTIDE SEQUENCE [LARGE SCALE GENOMIC DNA]</scope>
    <source>
        <strain>ATCC 204508 / S288c</strain>
    </source>
</reference>
<reference key="3">
    <citation type="journal article" date="2014" name="G3 (Bethesda)">
        <title>The reference genome sequence of Saccharomyces cerevisiae: Then and now.</title>
        <authorList>
            <person name="Engel S.R."/>
            <person name="Dietrich F.S."/>
            <person name="Fisk D.G."/>
            <person name="Binkley G."/>
            <person name="Balakrishnan R."/>
            <person name="Costanzo M.C."/>
            <person name="Dwight S.S."/>
            <person name="Hitz B.C."/>
            <person name="Karra K."/>
            <person name="Nash R.S."/>
            <person name="Weng S."/>
            <person name="Wong E.D."/>
            <person name="Lloyd P."/>
            <person name="Skrzypek M.S."/>
            <person name="Miyasato S.R."/>
            <person name="Simison M."/>
            <person name="Cherry J.M."/>
        </authorList>
    </citation>
    <scope>GENOME REANNOTATION</scope>
    <source>
        <strain>ATCC 204508 / S288c</strain>
    </source>
</reference>
<reference key="4">
    <citation type="journal article" date="1995" name="Biochem. Mol. Biol. Int.">
        <title>Pyrimidine moiety of thiamin is biosynthesized from pyridoxine and histidine in Saccharomyces cerevisiae.</title>
        <authorList>
            <person name="Tazuya K."/>
            <person name="Azumi C."/>
            <person name="Yamada K."/>
            <person name="Kumaoka H."/>
        </authorList>
    </citation>
    <scope>THIAMINE BIOSYNTHESIS IN YEAST</scope>
</reference>
<reference key="5">
    <citation type="journal article" date="2003" name="Microbiology">
        <title>The THI5 gene family of Saccharomyces cerevisiae: distribution of homologues among the hemiascomycetes and functional redundancy in the aerobic biosynthesis of thiamin from pyridoxine.</title>
        <authorList>
            <person name="Wightman R."/>
            <person name="Meacock P.A."/>
        </authorList>
    </citation>
    <scope>PATHWAY</scope>
</reference>
<reference key="6">
    <citation type="journal article" date="2008" name="J. Nutr. Sci. Vitaminol.">
        <title>The direct precursor of the pyrimidine moiety of thiamin is not urocanic acid but histidine in Saccharomyces cerevisiae.</title>
        <authorList>
            <person name="Ishida S."/>
            <person name="Tazuya-Murayama K."/>
            <person name="Kijima Y."/>
            <person name="Yamada K."/>
        </authorList>
    </citation>
    <scope>THIAMINE BIOSYNTHESIS IN YEAST</scope>
</reference>
<reference key="7">
    <citation type="journal article" date="2012" name="J. Biol. Chem.">
        <title>The last piece in the vitamin B1 biosynthesis puzzle: structural and functional insight into yeast 4-amino-5-hydroxymethyl-2-methylpyrimidine phosphate (HMP-P) synthase.</title>
        <authorList>
            <person name="Coquille S."/>
            <person name="Roux C."/>
            <person name="Fitzpatrick T.B."/>
            <person name="Thore S."/>
        </authorList>
    </citation>
    <scope>X-RAY CRYSTALLOGRAPHY (2.60 ANGSTROMS) IN COMPLEX WITH PYRIDOXAL PHOSPHATE</scope>
    <scope>FUNCTION</scope>
    <scope>CATALYTIC ACTIVITY</scope>
    <scope>SUBUNIT</scope>
    <scope>COFACTOR</scope>
    <scope>MASS SPECTROMETRY</scope>
    <scope>MUTAGENESIS OF ASN-11; TRP-12; LYS-62 AND HIS-66</scope>
</reference>
<evidence type="ECO:0000250" key="1">
    <source>
        <dbReference type="UniProtKB" id="C4YMW2"/>
    </source>
</evidence>
<evidence type="ECO:0000269" key="2">
    <source>
    </source>
</evidence>
<evidence type="ECO:0000303" key="3">
    <source>
    </source>
</evidence>
<evidence type="ECO:0000303" key="4">
    <source>
    </source>
</evidence>
<evidence type="ECO:0000303" key="5">
    <source ref="1"/>
</evidence>
<evidence type="ECO:0000305" key="6"/>
<evidence type="ECO:0000305" key="7">
    <source>
    </source>
</evidence>
<evidence type="ECO:0000305" key="8">
    <source>
    </source>
</evidence>
<evidence type="ECO:0000312" key="9">
    <source>
        <dbReference type="SGD" id="S000001836"/>
    </source>
</evidence>
<evidence type="ECO:0007829" key="10">
    <source>
        <dbReference type="PDB" id="4H65"/>
    </source>
</evidence>
<evidence type="ECO:0007829" key="11">
    <source>
        <dbReference type="PDB" id="4H67"/>
    </source>
</evidence>
<evidence type="ECO:0007829" key="12">
    <source>
        <dbReference type="PDB" id="4H6D"/>
    </source>
</evidence>
<comment type="function">
    <text evidence="2">Responsible for the formation of the pyrimidine heterocycle in the thiamine biosynthesis pathway. Catalyzes the formation of hydroxymethylpyrimidine phosphate (HMP-P) from histidine and pyridoxal phosphate (PLP). The protein uses PLP and the active site histidine to form HMP-P, generating an inactive enzyme. The enzyme can only undergo a single turnover, which suggests it is a suicide enzyme.</text>
</comment>
<comment type="catalytic activity">
    <reaction evidence="2">
        <text>N(6)-(pyridoxal phosphate)-L-lysyl-[4-amino-5-hydroxymethyl-2-methylpyrimidine phosphate synthase] + L-histidyl-[4-amino-5-hydroxymethyl-2-methylpyrimidine phosphate synthase] + 2 Fe(3+) + 4 H2O = L-lysyl-[4-amino-5-hydroxymethyl-2-methylpyrimidine phosphate synthase] + (2S)-2-amino-5-hydroxy-4-oxopentanoyl-[4-amino-5-hydroxymethyl-2-methylpyrimidine phosphate synthase] + 4-amino-2-methyl-5-(phosphooxymethyl)pyrimidine + 3-oxopropanoate + 2 Fe(2+) + 2 H(+)</text>
        <dbReference type="Rhea" id="RHEA:65756"/>
        <dbReference type="Rhea" id="RHEA-COMP:16892"/>
        <dbReference type="Rhea" id="RHEA-COMP:16893"/>
        <dbReference type="Rhea" id="RHEA-COMP:16894"/>
        <dbReference type="Rhea" id="RHEA-COMP:16895"/>
        <dbReference type="ChEBI" id="CHEBI:15377"/>
        <dbReference type="ChEBI" id="CHEBI:15378"/>
        <dbReference type="ChEBI" id="CHEBI:29033"/>
        <dbReference type="ChEBI" id="CHEBI:29034"/>
        <dbReference type="ChEBI" id="CHEBI:29969"/>
        <dbReference type="ChEBI" id="CHEBI:29979"/>
        <dbReference type="ChEBI" id="CHEBI:33190"/>
        <dbReference type="ChEBI" id="CHEBI:58354"/>
        <dbReference type="ChEBI" id="CHEBI:143915"/>
        <dbReference type="ChEBI" id="CHEBI:157692"/>
    </reaction>
    <physiologicalReaction direction="left-to-right" evidence="2">
        <dbReference type="Rhea" id="RHEA:65757"/>
    </physiologicalReaction>
</comment>
<comment type="cofactor">
    <cofactor evidence="2">
        <name>Fe cation</name>
        <dbReference type="ChEBI" id="CHEBI:24875"/>
    </cofactor>
</comment>
<comment type="pathway">
    <text evidence="7">Cofactor biosynthesis; thiamine diphosphate biosynthesis.</text>
</comment>
<comment type="subunit">
    <text evidence="2">Homodimer.</text>
</comment>
<comment type="interaction">
    <interactant intactId="EBI-19221">
        <id>P43534</id>
    </interactant>
    <interactant intactId="EBI-16219">
        <id>P39940</id>
        <label>RSP5</label>
    </interactant>
    <organismsDiffer>false</organismsDiffer>
    <experiments>2</experiments>
</comment>
<comment type="mass spectrometry" mass="38513.4" method="Electrospray" evidence="2">
    <text>This mass is that of the untagged protein plus the mass of an iron ion.</text>
</comment>
<comment type="similarity">
    <text evidence="6">Belongs to the NMT1/THI5 family.</text>
</comment>
<protein>
    <recommendedName>
        <fullName evidence="4">4-amino-5-hydroxymethyl-2-methylpyrimidine phosphate synthase THI5</fullName>
        <shortName evidence="4">HMP-P synthase</shortName>
        <shortName evidence="6">Hydroxymethylpyrimidine phosphate synthase</shortName>
        <ecNumber evidence="2">2.-.-.-</ecNumber>
    </recommendedName>
    <alternativeName>
        <fullName evidence="5">Thiamine biosynthesis protein 5</fullName>
    </alternativeName>
    <alternativeName>
        <fullName evidence="1">Thiamine pyrimidine synthase</fullName>
    </alternativeName>
</protein>
<organism>
    <name type="scientific">Saccharomyces cerevisiae (strain ATCC 204508 / S288c)</name>
    <name type="common">Baker's yeast</name>
    <dbReference type="NCBI Taxonomy" id="559292"/>
    <lineage>
        <taxon>Eukaryota</taxon>
        <taxon>Fungi</taxon>
        <taxon>Dikarya</taxon>
        <taxon>Ascomycota</taxon>
        <taxon>Saccharomycotina</taxon>
        <taxon>Saccharomycetes</taxon>
        <taxon>Saccharomycetales</taxon>
        <taxon>Saccharomycetaceae</taxon>
        <taxon>Saccharomyces</taxon>
    </lineage>
</organism>
<sequence length="340" mass="38592">MSTDKITFLLNWQPTPYHIPIFLAQTKGYFKEQGLDMAILEPTNPSDVTELIGSGKVDMGLKAMIHTLAAKARGFPVTSVASLLDEPFTGVLYLKGSGITEDFQSLKGKKIGYVGEFGKIQIDELTKHYGMKPEDYTAVRCGMNVAKYIIEGKIDAGIGIECMQQVELEEYLAKQGRPASDAKMLRIDKLACLGCCCFCTVLYICNDEFLKKNPEKVRKFLKAIKKATDYVLADPVKAWKEYIDFKPQLNNDLSYKQYQRCYAYFSSSLYNVHRDWKKVTGYGKRLAILPPDYVSNYTNEYLSWPEPEEVSDPLEAQRLMAIHQEKCRQEGTFKRLALPA</sequence>
<gene>
    <name evidence="5" type="primary">THI5</name>
    <name evidence="3" type="synonym">MOL2</name>
    <name evidence="9" type="ordered locus">YFL058W</name>
</gene>
<dbReference type="EC" id="2.-.-.-" evidence="2"/>
<dbReference type="EMBL" id="Z48220">
    <property type="protein sequence ID" value="CAA88253.1"/>
    <property type="molecule type" value="Genomic_DNA"/>
</dbReference>
<dbReference type="EMBL" id="D50617">
    <property type="protein sequence ID" value="BAA09183.1"/>
    <property type="molecule type" value="Genomic_DNA"/>
</dbReference>
<dbReference type="EMBL" id="BK006940">
    <property type="protein sequence ID" value="DAA12382.1"/>
    <property type="molecule type" value="Genomic_DNA"/>
</dbReference>
<dbReference type="RefSeq" id="NP_116597.1">
    <property type="nucleotide sequence ID" value="NM_001179909.1"/>
</dbReference>
<dbReference type="PDB" id="4H65">
    <property type="method" value="X-ray"/>
    <property type="resolution" value="2.60 A"/>
    <property type="chains" value="A/B=1-340"/>
</dbReference>
<dbReference type="PDB" id="4H67">
    <property type="method" value="X-ray"/>
    <property type="resolution" value="2.70 A"/>
    <property type="chains" value="A/B/C/D/E/F/G/H=1-340"/>
</dbReference>
<dbReference type="PDB" id="4H6D">
    <property type="method" value="X-ray"/>
    <property type="resolution" value="2.90 A"/>
    <property type="chains" value="A/B/C/D/E/F/G/H=1-340"/>
</dbReference>
<dbReference type="PDBsum" id="4H65"/>
<dbReference type="PDBsum" id="4H67"/>
<dbReference type="PDBsum" id="4H6D"/>
<dbReference type="SMR" id="P43534"/>
<dbReference type="BioGRID" id="31089">
    <property type="interactions" value="25"/>
</dbReference>
<dbReference type="DIP" id="DIP-3951N"/>
<dbReference type="FunCoup" id="P43534">
    <property type="interactions" value="173"/>
</dbReference>
<dbReference type="IntAct" id="P43534">
    <property type="interactions" value="2"/>
</dbReference>
<dbReference type="STRING" id="4932.YFL058W"/>
<dbReference type="PaxDb" id="4932-YFL058W"/>
<dbReference type="PeptideAtlas" id="P43534"/>
<dbReference type="EnsemblFungi" id="YFL058W_mRNA">
    <property type="protein sequence ID" value="YFL058W"/>
    <property type="gene ID" value="YFL058W"/>
</dbReference>
<dbReference type="GeneID" id="850486"/>
<dbReference type="KEGG" id="sce:YFL058W"/>
<dbReference type="AGR" id="SGD:S000001836"/>
<dbReference type="SGD" id="S000001836">
    <property type="gene designation" value="THI5"/>
</dbReference>
<dbReference type="VEuPathDB" id="FungiDB:YFL058W"/>
<dbReference type="eggNOG" id="ENOG502QQ87">
    <property type="taxonomic scope" value="Eukaryota"/>
</dbReference>
<dbReference type="GeneTree" id="ENSGT00940000176330"/>
<dbReference type="HOGENOM" id="CLU_028871_6_3_1"/>
<dbReference type="InParanoid" id="P43534"/>
<dbReference type="OMA" id="PNDAKML"/>
<dbReference type="OrthoDB" id="434407at2759"/>
<dbReference type="BioCyc" id="MetaCyc:MONOMER3O-3915"/>
<dbReference type="BioCyc" id="YEAST:MONOMER3O-3915"/>
<dbReference type="BRENDA" id="4.1.99.17">
    <property type="organism ID" value="984"/>
</dbReference>
<dbReference type="UniPathway" id="UPA00060"/>
<dbReference type="EvolutionaryTrace" id="P43534"/>
<dbReference type="PRO" id="PR:P43534"/>
<dbReference type="Proteomes" id="UP000002311">
    <property type="component" value="Chromosome VI"/>
</dbReference>
<dbReference type="RNAct" id="P43534">
    <property type="molecule type" value="protein"/>
</dbReference>
<dbReference type="GO" id="GO:0106344">
    <property type="term" value="F:4-amino-5-hydroxymethyl-2-methylpyrimidine phosphate synthase activity from histidine and PLP"/>
    <property type="evidence" value="ECO:0000314"/>
    <property type="project" value="UniProtKB"/>
</dbReference>
<dbReference type="GO" id="GO:0005506">
    <property type="term" value="F:iron ion binding"/>
    <property type="evidence" value="ECO:0000314"/>
    <property type="project" value="UniProtKB"/>
</dbReference>
<dbReference type="GO" id="GO:0009228">
    <property type="term" value="P:thiamine biosynthetic process"/>
    <property type="evidence" value="ECO:0000314"/>
    <property type="project" value="UniProtKB"/>
</dbReference>
<dbReference type="GO" id="GO:0009229">
    <property type="term" value="P:thiamine diphosphate biosynthetic process"/>
    <property type="evidence" value="ECO:0007669"/>
    <property type="project" value="UniProtKB-UniPathway"/>
</dbReference>
<dbReference type="CDD" id="cd13650">
    <property type="entry name" value="PBP2_THI5"/>
    <property type="match status" value="1"/>
</dbReference>
<dbReference type="FunFam" id="3.40.190.10:FF:000246">
    <property type="entry name" value="4-amino-5-hydroxymethyl-2-methylpyrimidine phosphate synthase THI13"/>
    <property type="match status" value="1"/>
</dbReference>
<dbReference type="FunFam" id="3.40.190.10:FF:000187">
    <property type="entry name" value="4-amino-5-hydroxymethyl-2-methylpyrimidine phosphate synthase THI5"/>
    <property type="match status" value="1"/>
</dbReference>
<dbReference type="Gene3D" id="3.40.190.10">
    <property type="entry name" value="Periplasmic binding protein-like II"/>
    <property type="match status" value="2"/>
</dbReference>
<dbReference type="InterPro" id="IPR027939">
    <property type="entry name" value="NMT1/THI5"/>
</dbReference>
<dbReference type="InterPro" id="IPR015168">
    <property type="entry name" value="SsuA/THI5"/>
</dbReference>
<dbReference type="PANTHER" id="PTHR31528">
    <property type="entry name" value="4-AMINO-5-HYDROXYMETHYL-2-METHYLPYRIMIDINE PHOSPHATE SYNTHASE THI11-RELATED"/>
    <property type="match status" value="1"/>
</dbReference>
<dbReference type="PANTHER" id="PTHR31528:SF1">
    <property type="entry name" value="4-AMINO-5-HYDROXYMETHYL-2-METHYLPYRIMIDINE PHOSPHATE SYNTHASE THI11-RELATED"/>
    <property type="match status" value="1"/>
</dbReference>
<dbReference type="Pfam" id="PF09084">
    <property type="entry name" value="NMT1"/>
    <property type="match status" value="1"/>
</dbReference>
<dbReference type="SUPFAM" id="SSF53850">
    <property type="entry name" value="Periplasmic binding protein-like II"/>
    <property type="match status" value="1"/>
</dbReference>
<feature type="chain" id="PRO_0000211618" description="4-amino-5-hydroxymethyl-2-methylpyrimidine phosphate synthase THI5">
    <location>
        <begin position="1"/>
        <end position="340"/>
    </location>
</feature>
<feature type="short sequence motif" description="CCCFC; essential for catalytic activity, may be the site of iron coordination" evidence="8">
    <location>
        <begin position="195"/>
        <end position="199"/>
    </location>
</feature>
<feature type="active site" evidence="8">
    <location>
        <position position="66"/>
    </location>
</feature>
<feature type="binding site" evidence="2">
    <location>
        <begin position="115"/>
        <end position="118"/>
    </location>
    <ligand>
        <name>pyridoxal 5'-phosphate</name>
        <dbReference type="ChEBI" id="CHEBI:597326"/>
    </ligand>
</feature>
<feature type="modified residue" description="N6-(pyridoxal phosphate)lysine" evidence="2">
    <location>
        <position position="62"/>
    </location>
</feature>
<feature type="mutagenesis site" description="Unable to sustain growth in thiamine-free medium." evidence="2">
    <original>N</original>
    <variation>A</variation>
    <location>
        <position position="11"/>
    </location>
</feature>
<feature type="mutagenesis site" description="Unable to sustain growth in thiamine-free medium." evidence="2">
    <original>W</original>
    <variation>A</variation>
    <location>
        <position position="12"/>
    </location>
</feature>
<feature type="mutagenesis site" description="Unable to sustain growth in thiamine-free medium." evidence="2">
    <original>K</original>
    <variation>A</variation>
    <location>
        <position position="62"/>
    </location>
</feature>
<feature type="mutagenesis site" description="Unable to sustain growth in thiamine-free medium." evidence="2">
    <original>H</original>
    <variation>A</variation>
    <location>
        <position position="66"/>
    </location>
</feature>
<feature type="mutagenesis site" description="Attenuates the coordination of ion and is unable to sustain growth in thiamine-free medium." evidence="2">
    <original>C</original>
    <variation>A</variation>
    <location>
        <position position="195"/>
    </location>
</feature>
<feature type="mutagenesis site" description="Attenuates the coordination of ion and is unable to sustain growth in thiamine-free medium." evidence="2">
    <original>C</original>
    <variation>A</variation>
    <location>
        <position position="196"/>
    </location>
</feature>
<feature type="mutagenesis site" description="Attenuates the coordination of ion and is unable to sustain growth in thiamine-free medium." evidence="2">
    <original>C</original>
    <variation>A</variation>
    <location>
        <position position="197"/>
    </location>
</feature>
<feature type="mutagenesis site" description="Attenuates the coordination of ion and is unable to sustain growth in thiamine-free medium." evidence="2">
    <original>C</original>
    <variation>A</variation>
    <location>
        <position position="199"/>
    </location>
</feature>
<feature type="strand" evidence="10">
    <location>
        <begin position="6"/>
        <end position="9"/>
    </location>
</feature>
<feature type="strand" evidence="10">
    <location>
        <begin position="11"/>
        <end position="13"/>
    </location>
</feature>
<feature type="helix" evidence="10">
    <location>
        <begin position="16"/>
        <end position="18"/>
    </location>
</feature>
<feature type="helix" evidence="10">
    <location>
        <begin position="19"/>
        <end position="26"/>
    </location>
</feature>
<feature type="helix" evidence="10">
    <location>
        <begin position="29"/>
        <end position="32"/>
    </location>
</feature>
<feature type="strand" evidence="10">
    <location>
        <begin position="37"/>
        <end position="44"/>
    </location>
</feature>
<feature type="helix" evidence="10">
    <location>
        <begin position="45"/>
        <end position="47"/>
    </location>
</feature>
<feature type="helix" evidence="10">
    <location>
        <begin position="48"/>
        <end position="54"/>
    </location>
</feature>
<feature type="strand" evidence="10">
    <location>
        <begin position="55"/>
        <end position="57"/>
    </location>
</feature>
<feature type="strand" evidence="10">
    <location>
        <begin position="59"/>
        <end position="63"/>
    </location>
</feature>
<feature type="helix" evidence="10">
    <location>
        <begin position="64"/>
        <end position="71"/>
    </location>
</feature>
<feature type="turn" evidence="10">
    <location>
        <begin position="72"/>
        <end position="74"/>
    </location>
</feature>
<feature type="strand" evidence="10">
    <location>
        <begin position="77"/>
        <end position="84"/>
    </location>
</feature>
<feature type="strand" evidence="10">
    <location>
        <begin position="89"/>
        <end position="94"/>
    </location>
</feature>
<feature type="turn" evidence="10">
    <location>
        <begin position="95"/>
        <end position="98"/>
    </location>
</feature>
<feature type="helix" evidence="10">
    <location>
        <begin position="103"/>
        <end position="106"/>
    </location>
</feature>
<feature type="strand" evidence="10">
    <location>
        <begin position="110"/>
        <end position="113"/>
    </location>
</feature>
<feature type="helix" evidence="11">
    <location>
        <begin position="117"/>
        <end position="127"/>
    </location>
</feature>
<feature type="turn" evidence="11">
    <location>
        <begin position="128"/>
        <end position="130"/>
    </location>
</feature>
<feature type="strand" evidence="10">
    <location>
        <begin position="135"/>
        <end position="140"/>
    </location>
</feature>
<feature type="helix" evidence="10">
    <location>
        <begin position="142"/>
        <end position="144"/>
    </location>
</feature>
<feature type="helix" evidence="10">
    <location>
        <begin position="145"/>
        <end position="150"/>
    </location>
</feature>
<feature type="strand" evidence="10">
    <location>
        <begin position="153"/>
        <end position="160"/>
    </location>
</feature>
<feature type="turn" evidence="10">
    <location>
        <begin position="161"/>
        <end position="163"/>
    </location>
</feature>
<feature type="helix" evidence="10">
    <location>
        <begin position="164"/>
        <end position="174"/>
    </location>
</feature>
<feature type="helix" evidence="10">
    <location>
        <begin position="179"/>
        <end position="181"/>
    </location>
</feature>
<feature type="strand" evidence="10">
    <location>
        <begin position="182"/>
        <end position="186"/>
    </location>
</feature>
<feature type="strand" evidence="12">
    <location>
        <begin position="192"/>
        <end position="194"/>
    </location>
</feature>
<feature type="helix" evidence="12">
    <location>
        <begin position="196"/>
        <end position="199"/>
    </location>
</feature>
<feature type="strand" evidence="10">
    <location>
        <begin position="201"/>
        <end position="206"/>
    </location>
</feature>
<feature type="helix" evidence="10">
    <location>
        <begin position="207"/>
        <end position="212"/>
    </location>
</feature>
<feature type="helix" evidence="10">
    <location>
        <begin position="214"/>
        <end position="233"/>
    </location>
</feature>
<feature type="helix" evidence="10">
    <location>
        <begin position="235"/>
        <end position="245"/>
    </location>
</feature>
<feature type="helix" evidence="10">
    <location>
        <begin position="247"/>
        <end position="249"/>
    </location>
</feature>
<feature type="helix" evidence="10">
    <location>
        <begin position="252"/>
        <end position="261"/>
    </location>
</feature>
<feature type="turn" evidence="10">
    <location>
        <begin position="262"/>
        <end position="264"/>
    </location>
</feature>
<feature type="helix" evidence="10">
    <location>
        <begin position="273"/>
        <end position="285"/>
    </location>
</feature>
<feature type="helix" evidence="10">
    <location>
        <begin position="315"/>
        <end position="330"/>
    </location>
</feature>
<proteinExistence type="evidence at protein level"/>
<name>THI5_YEAST</name>
<accession>P43534</accession>
<accession>D6VTH2</accession>